<name>DABA_LEGPC</name>
<gene>
    <name evidence="1" type="primary">dabA</name>
    <name type="ordered locus">LPC_0297</name>
</gene>
<accession>A5IA92</accession>
<dbReference type="EMBL" id="CP000675">
    <property type="protein sequence ID" value="ABQ54292.1"/>
    <property type="molecule type" value="Genomic_DNA"/>
</dbReference>
<dbReference type="RefSeq" id="WP_011945464.1">
    <property type="nucleotide sequence ID" value="NZ_JAPMSS010000003.1"/>
</dbReference>
<dbReference type="KEGG" id="lpc:LPC_0297"/>
<dbReference type="HOGENOM" id="CLU_009885_0_0_6"/>
<dbReference type="GO" id="GO:0005886">
    <property type="term" value="C:plasma membrane"/>
    <property type="evidence" value="ECO:0007669"/>
    <property type="project" value="UniProtKB-SubCell"/>
</dbReference>
<dbReference type="GO" id="GO:0008270">
    <property type="term" value="F:zinc ion binding"/>
    <property type="evidence" value="ECO:0007669"/>
    <property type="project" value="UniProtKB-UniRule"/>
</dbReference>
<dbReference type="HAMAP" id="MF_01871">
    <property type="entry name" value="DabA"/>
    <property type="match status" value="1"/>
</dbReference>
<dbReference type="InterPro" id="IPR018752">
    <property type="entry name" value="DabA"/>
</dbReference>
<dbReference type="PANTHER" id="PTHR38344:SF1">
    <property type="entry name" value="INORGANIC CARBON TRANSPORTER SUBUNIT DABA-RELATED"/>
    <property type="match status" value="1"/>
</dbReference>
<dbReference type="PANTHER" id="PTHR38344">
    <property type="entry name" value="UPF0753 PROTEIN AQ_863"/>
    <property type="match status" value="1"/>
</dbReference>
<dbReference type="Pfam" id="PF10070">
    <property type="entry name" value="DabA"/>
    <property type="match status" value="2"/>
</dbReference>
<sequence>MSSHITLIKTNTNNENQMTQFNYKVDNDVMIIRAMVNNVAKQITPVWPLEKFIACNSLHGFESMSFEEAVIQNQTAKKGTPFNEKLERVNWHMIKWCGSFLDIGQGTLEMPHRDKGLYFGFLKLAPFDSELHQNNKSTKSWLSNLPEMPEQAIRLCLNKLGVLNQKQEKFLKSTLSHLPGWAGYIKWISEWKNRNGKEENPVSLADFLAVRLIITCVLWPEASQEEKKKKKDNAYTKQLIQNIKNKEDDYRQLLLNKLLPELDKVQIKENRANAQMVFCIDVRSEPFRRCIEKLGHYETLGFAGFFGLPVSIKDYDGETIKDSCPVLLKPRFNIHEKAIAANEHCIEHHEKGKEFKNILNRIYQQLKYNFSTPFALVESLGIWCGITMFLKSCSPIFARRLTKDLNEMICPSIQTQPVFELDLLEKEVGISLQEQIAYAEMALRLMGLTDNFAKLVIFCGHGSSTQNNPYASALDCGACGGNQGGKNAQLLASILNKIIVRRALAENGINIPQDTLFYGAQHDTTTDEVEIYHSNVSQFIHQDILDQLRTDLNIAKHNNNLERINYLNSIDCAEKDIARRSTDWSETRPEWGLARNAAFIVAPRQLTKNINLEGRCFLHSYDWSQDKDGALLETILTAPMVVAQWINTQYLFSTIDNVAYGSGSKITHNVAGKIGVMQGNASDLMHGLPLQSVMSHDDKSFHEPQRLLTLVYAPREIISELVEKHDVLKTLFFNEWVHLVAIDPRSHLFYKLEKTNTWSVIQ</sequence>
<comment type="function">
    <text evidence="1">Part of an energy-coupled inorganic carbon pump.</text>
</comment>
<comment type="cofactor">
    <cofactor evidence="1">
        <name>Zn(2+)</name>
        <dbReference type="ChEBI" id="CHEBI:29105"/>
    </cofactor>
</comment>
<comment type="subunit">
    <text evidence="1">Forms a complex with DabB.</text>
</comment>
<comment type="subcellular location">
    <subcellularLocation>
        <location evidence="1">Cell inner membrane</location>
        <topology evidence="1">Peripheral membrane protein</topology>
    </subcellularLocation>
</comment>
<comment type="similarity">
    <text evidence="1">Belongs to the inorganic carbon transporter (TC 9.A.2) DabA family.</text>
</comment>
<organism>
    <name type="scientific">Legionella pneumophila (strain Corby)</name>
    <dbReference type="NCBI Taxonomy" id="400673"/>
    <lineage>
        <taxon>Bacteria</taxon>
        <taxon>Pseudomonadati</taxon>
        <taxon>Pseudomonadota</taxon>
        <taxon>Gammaproteobacteria</taxon>
        <taxon>Legionellales</taxon>
        <taxon>Legionellaceae</taxon>
        <taxon>Legionella</taxon>
    </lineage>
</organism>
<evidence type="ECO:0000255" key="1">
    <source>
        <dbReference type="HAMAP-Rule" id="MF_01871"/>
    </source>
</evidence>
<keyword id="KW-0997">Cell inner membrane</keyword>
<keyword id="KW-1003">Cell membrane</keyword>
<keyword id="KW-0472">Membrane</keyword>
<keyword id="KW-0479">Metal-binding</keyword>
<keyword id="KW-0813">Transport</keyword>
<keyword id="KW-0862">Zinc</keyword>
<proteinExistence type="inferred from homology"/>
<feature type="chain" id="PRO_0000387269" description="Probable inorganic carbon transporter subunit DabA">
    <location>
        <begin position="1"/>
        <end position="762"/>
    </location>
</feature>
<feature type="binding site" evidence="1">
    <location>
        <position position="279"/>
    </location>
    <ligand>
        <name>Zn(2+)</name>
        <dbReference type="ChEBI" id="CHEBI:29105"/>
    </ligand>
</feature>
<feature type="binding site" evidence="1">
    <location>
        <position position="281"/>
    </location>
    <ligand>
        <name>Zn(2+)</name>
        <dbReference type="ChEBI" id="CHEBI:29105"/>
    </ligand>
</feature>
<feature type="binding site" evidence="1">
    <location>
        <position position="461"/>
    </location>
    <ligand>
        <name>Zn(2+)</name>
        <dbReference type="ChEBI" id="CHEBI:29105"/>
    </ligand>
</feature>
<feature type="binding site" evidence="1">
    <location>
        <position position="476"/>
    </location>
    <ligand>
        <name>Zn(2+)</name>
        <dbReference type="ChEBI" id="CHEBI:29105"/>
    </ligand>
</feature>
<protein>
    <recommendedName>
        <fullName evidence="1">Probable inorganic carbon transporter subunit DabA</fullName>
    </recommendedName>
</protein>
<reference key="1">
    <citation type="submission" date="2006-11" db="EMBL/GenBank/DDBJ databases">
        <title>Identification and characterization of a new conjugation/ type IVA secretion system (trb/tra) of L. pneumophila Corby localized on a mobile genomic island.</title>
        <authorList>
            <person name="Gloeckner G."/>
            <person name="Albert-Weissenberger C."/>
            <person name="Weinmann E."/>
            <person name="Jacobi S."/>
            <person name="Schunder E."/>
            <person name="Steinert M."/>
            <person name="Buchrieser C."/>
            <person name="Hacker J."/>
            <person name="Heuner K."/>
        </authorList>
    </citation>
    <scope>NUCLEOTIDE SEQUENCE [LARGE SCALE GENOMIC DNA]</scope>
    <source>
        <strain>Corby</strain>
    </source>
</reference>